<proteinExistence type="inferred from homology"/>
<accession>Q8LW83</accession>
<sequence>MAPNLRKSHPLLKLINNSLIDLPTPSNISAWWNFGSLLGICLLTQILTGLLLATHYTADTTLAFSSVAHTCRNVQYGWLIRNLHANGASFFFICIYLHIGRGFYYGSYLNKETWNTGIILLLTLMATAFVGYVLPWGQMSFWGATVITNLFSAIPYIGQTLVEWAWGGFSVDNPTLTRFFALHFLLPFMIAGLALIHLTFLHESGSNNPLGILSNCDKIPFHPYFSLKDILGFIIMFLPLTTLALFSPNLLGDPENFTPANPLVTPPHIKPEWYFLFAYAILRSIPNKLGGVLALAASVLVLFLVPLLHKSKQRAMTFRPLSQFLFWTLVANLLILTWVGSQPVEHPFIIIGQLASLTYFTILLLLFPIIGALENKMLNY</sequence>
<feature type="chain" id="PRO_0000061398" description="Cytochrome b">
    <location>
        <begin position="1"/>
        <end position="380"/>
    </location>
</feature>
<feature type="transmembrane region" description="Helical" evidence="2">
    <location>
        <begin position="34"/>
        <end position="54"/>
    </location>
</feature>
<feature type="transmembrane region" description="Helical" evidence="2">
    <location>
        <begin position="78"/>
        <end position="99"/>
    </location>
</feature>
<feature type="transmembrane region" description="Helical" evidence="2">
    <location>
        <begin position="114"/>
        <end position="134"/>
    </location>
</feature>
<feature type="transmembrane region" description="Helical" evidence="2">
    <location>
        <begin position="179"/>
        <end position="199"/>
    </location>
</feature>
<feature type="transmembrane region" description="Helical" evidence="2">
    <location>
        <begin position="227"/>
        <end position="247"/>
    </location>
</feature>
<feature type="transmembrane region" description="Helical" evidence="2">
    <location>
        <begin position="289"/>
        <end position="309"/>
    </location>
</feature>
<feature type="transmembrane region" description="Helical" evidence="2">
    <location>
        <begin position="321"/>
        <end position="341"/>
    </location>
</feature>
<feature type="transmembrane region" description="Helical" evidence="2">
    <location>
        <begin position="348"/>
        <end position="368"/>
    </location>
</feature>
<feature type="binding site" description="axial binding residue" evidence="2">
    <location>
        <position position="84"/>
    </location>
    <ligand>
        <name>heme b</name>
        <dbReference type="ChEBI" id="CHEBI:60344"/>
        <label>b562</label>
    </ligand>
    <ligandPart>
        <name>Fe</name>
        <dbReference type="ChEBI" id="CHEBI:18248"/>
    </ligandPart>
</feature>
<feature type="binding site" description="axial binding residue" evidence="2">
    <location>
        <position position="98"/>
    </location>
    <ligand>
        <name>heme b</name>
        <dbReference type="ChEBI" id="CHEBI:60344"/>
        <label>b566</label>
    </ligand>
    <ligandPart>
        <name>Fe</name>
        <dbReference type="ChEBI" id="CHEBI:18248"/>
    </ligandPart>
</feature>
<feature type="binding site" description="axial binding residue" evidence="2">
    <location>
        <position position="183"/>
    </location>
    <ligand>
        <name>heme b</name>
        <dbReference type="ChEBI" id="CHEBI:60344"/>
        <label>b562</label>
    </ligand>
    <ligandPart>
        <name>Fe</name>
        <dbReference type="ChEBI" id="CHEBI:18248"/>
    </ligandPart>
</feature>
<feature type="binding site" description="axial binding residue" evidence="2">
    <location>
        <position position="197"/>
    </location>
    <ligand>
        <name>heme b</name>
        <dbReference type="ChEBI" id="CHEBI:60344"/>
        <label>b566</label>
    </ligand>
    <ligandPart>
        <name>Fe</name>
        <dbReference type="ChEBI" id="CHEBI:18248"/>
    </ligandPart>
</feature>
<feature type="binding site" evidence="2">
    <location>
        <position position="202"/>
    </location>
    <ligand>
        <name>a ubiquinone</name>
        <dbReference type="ChEBI" id="CHEBI:16389"/>
    </ligand>
</feature>
<comment type="function">
    <text evidence="2">Component of the ubiquinol-cytochrome c reductase complex (complex III or cytochrome b-c1 complex) that is part of the mitochondrial respiratory chain. The b-c1 complex mediates electron transfer from ubiquinol to cytochrome c. Contributes to the generation of a proton gradient across the mitochondrial membrane that is then used for ATP synthesis.</text>
</comment>
<comment type="cofactor">
    <cofactor evidence="2">
        <name>heme b</name>
        <dbReference type="ChEBI" id="CHEBI:60344"/>
    </cofactor>
    <text evidence="2">Binds 2 heme b groups non-covalently.</text>
</comment>
<comment type="subunit">
    <text evidence="2">The cytochrome bc1 complex contains 11 subunits: 3 respiratory subunits (MT-CYB, CYC1 and UQCRFS1), 2 core proteins (UQCRC1 and UQCRC2) and 6 low-molecular weight proteins (UQCRH/QCR6, UQCRB/QCR7, UQCRQ/QCR8, UQCR10/QCR9, UQCR11/QCR10 and a cleavage product of UQCRFS1). This cytochrome bc1 complex then forms a dimer.</text>
</comment>
<comment type="subcellular location">
    <subcellularLocation>
        <location evidence="2">Mitochondrion inner membrane</location>
        <topology evidence="2">Multi-pass membrane protein</topology>
    </subcellularLocation>
</comment>
<comment type="miscellaneous">
    <text evidence="1">Heme 1 (or BL or b562) is low-potential and absorbs at about 562 nm, and heme 2 (or BH or b566) is high-potential and absorbs at about 566 nm.</text>
</comment>
<comment type="similarity">
    <text evidence="3 4">Belongs to the cytochrome b family.</text>
</comment>
<comment type="caution">
    <text evidence="2">The full-length protein contains only eight transmembrane helices, not nine as predicted by bioinformatics tools.</text>
</comment>
<geneLocation type="mitochondrion"/>
<evidence type="ECO:0000250" key="1"/>
<evidence type="ECO:0000250" key="2">
    <source>
        <dbReference type="UniProtKB" id="P00157"/>
    </source>
</evidence>
<evidence type="ECO:0000255" key="3">
    <source>
        <dbReference type="PROSITE-ProRule" id="PRU00967"/>
    </source>
</evidence>
<evidence type="ECO:0000255" key="4">
    <source>
        <dbReference type="PROSITE-ProRule" id="PRU00968"/>
    </source>
</evidence>
<protein>
    <recommendedName>
        <fullName>Cytochrome b</fullName>
    </recommendedName>
    <alternativeName>
        <fullName>Complex III subunit 3</fullName>
    </alternativeName>
    <alternativeName>
        <fullName>Complex III subunit III</fullName>
    </alternativeName>
    <alternativeName>
        <fullName>Cytochrome b-c1 complex subunit 3</fullName>
    </alternativeName>
    <alternativeName>
        <fullName>Ubiquinol-cytochrome-c reductase complex cytochrome b subunit</fullName>
    </alternativeName>
</protein>
<reference key="1">
    <citation type="journal article" date="2002" name="Mol. Biol. Evol.">
        <title>Mitochondrial DNA sequence evolution and phylogeny of the Atlantic Alcidae, including the extinct great auk (Pinguinus impennis).</title>
        <authorList>
            <person name="Moum T."/>
            <person name="Arnason U."/>
            <person name="Arnason E."/>
        </authorList>
    </citation>
    <scope>NUCLEOTIDE SEQUENCE [GENOMIC DNA]</scope>
    <source>
        <tissue>Feather</tissue>
        <tissue>Skin</tissue>
    </source>
</reference>
<dbReference type="EMBL" id="AJ242685">
    <property type="protein sequence ID" value="CAC80349.1"/>
    <property type="molecule type" value="Genomic_DNA"/>
</dbReference>
<dbReference type="SMR" id="Q8LW83"/>
<dbReference type="GO" id="GO:0005743">
    <property type="term" value="C:mitochondrial inner membrane"/>
    <property type="evidence" value="ECO:0007669"/>
    <property type="project" value="UniProtKB-SubCell"/>
</dbReference>
<dbReference type="GO" id="GO:0045275">
    <property type="term" value="C:respiratory chain complex III"/>
    <property type="evidence" value="ECO:0007669"/>
    <property type="project" value="InterPro"/>
</dbReference>
<dbReference type="GO" id="GO:0046872">
    <property type="term" value="F:metal ion binding"/>
    <property type="evidence" value="ECO:0007669"/>
    <property type="project" value="UniProtKB-KW"/>
</dbReference>
<dbReference type="GO" id="GO:0008121">
    <property type="term" value="F:ubiquinol-cytochrome-c reductase activity"/>
    <property type="evidence" value="ECO:0007669"/>
    <property type="project" value="InterPro"/>
</dbReference>
<dbReference type="GO" id="GO:0006122">
    <property type="term" value="P:mitochondrial electron transport, ubiquinol to cytochrome c"/>
    <property type="evidence" value="ECO:0007669"/>
    <property type="project" value="TreeGrafter"/>
</dbReference>
<dbReference type="CDD" id="cd00290">
    <property type="entry name" value="cytochrome_b_C"/>
    <property type="match status" value="1"/>
</dbReference>
<dbReference type="CDD" id="cd00284">
    <property type="entry name" value="Cytochrome_b_N"/>
    <property type="match status" value="1"/>
</dbReference>
<dbReference type="FunFam" id="1.20.810.10:FF:000002">
    <property type="entry name" value="Cytochrome b"/>
    <property type="match status" value="1"/>
</dbReference>
<dbReference type="Gene3D" id="1.20.810.10">
    <property type="entry name" value="Cytochrome Bc1 Complex, Chain C"/>
    <property type="match status" value="1"/>
</dbReference>
<dbReference type="InterPro" id="IPR005798">
    <property type="entry name" value="Cyt_b/b6_C"/>
</dbReference>
<dbReference type="InterPro" id="IPR036150">
    <property type="entry name" value="Cyt_b/b6_C_sf"/>
</dbReference>
<dbReference type="InterPro" id="IPR005797">
    <property type="entry name" value="Cyt_b/b6_N"/>
</dbReference>
<dbReference type="InterPro" id="IPR027387">
    <property type="entry name" value="Cytb/b6-like_sf"/>
</dbReference>
<dbReference type="InterPro" id="IPR030689">
    <property type="entry name" value="Cytochrome_b"/>
</dbReference>
<dbReference type="InterPro" id="IPR048260">
    <property type="entry name" value="Cytochrome_b_C_euk/bac"/>
</dbReference>
<dbReference type="InterPro" id="IPR048259">
    <property type="entry name" value="Cytochrome_b_N_euk/bac"/>
</dbReference>
<dbReference type="InterPro" id="IPR016174">
    <property type="entry name" value="Di-haem_cyt_TM"/>
</dbReference>
<dbReference type="PANTHER" id="PTHR19271">
    <property type="entry name" value="CYTOCHROME B"/>
    <property type="match status" value="1"/>
</dbReference>
<dbReference type="PANTHER" id="PTHR19271:SF16">
    <property type="entry name" value="CYTOCHROME B"/>
    <property type="match status" value="1"/>
</dbReference>
<dbReference type="Pfam" id="PF00032">
    <property type="entry name" value="Cytochrom_B_C"/>
    <property type="match status" value="1"/>
</dbReference>
<dbReference type="Pfam" id="PF00033">
    <property type="entry name" value="Cytochrome_B"/>
    <property type="match status" value="1"/>
</dbReference>
<dbReference type="PIRSF" id="PIRSF038885">
    <property type="entry name" value="COB"/>
    <property type="match status" value="1"/>
</dbReference>
<dbReference type="SUPFAM" id="SSF81648">
    <property type="entry name" value="a domain/subunit of cytochrome bc1 complex (Ubiquinol-cytochrome c reductase)"/>
    <property type="match status" value="1"/>
</dbReference>
<dbReference type="SUPFAM" id="SSF81342">
    <property type="entry name" value="Transmembrane di-heme cytochromes"/>
    <property type="match status" value="1"/>
</dbReference>
<dbReference type="PROSITE" id="PS51003">
    <property type="entry name" value="CYTB_CTER"/>
    <property type="match status" value="1"/>
</dbReference>
<dbReference type="PROSITE" id="PS51002">
    <property type="entry name" value="CYTB_NTER"/>
    <property type="match status" value="1"/>
</dbReference>
<gene>
    <name type="primary">MT-CYB</name>
    <name type="synonym">COB</name>
    <name type="synonym">CYTB</name>
    <name type="synonym">MTCYB</name>
</gene>
<organism>
    <name type="scientific">Pinguinus impennis</name>
    <name type="common">Great auk</name>
    <dbReference type="NCBI Taxonomy" id="94623"/>
    <lineage>
        <taxon>Eukaryota</taxon>
        <taxon>Metazoa</taxon>
        <taxon>Chordata</taxon>
        <taxon>Craniata</taxon>
        <taxon>Vertebrata</taxon>
        <taxon>Euteleostomi</taxon>
        <taxon>Archelosauria</taxon>
        <taxon>Archosauria</taxon>
        <taxon>Dinosauria</taxon>
        <taxon>Saurischia</taxon>
        <taxon>Theropoda</taxon>
        <taxon>Coelurosauria</taxon>
        <taxon>Aves</taxon>
        <taxon>Neognathae</taxon>
        <taxon>Neoaves</taxon>
        <taxon>Charadriiformes</taxon>
        <taxon>Laridae</taxon>
        <taxon>Pinguinus</taxon>
    </lineage>
</organism>
<name>CYB_PINIM</name>
<keyword id="KW-0249">Electron transport</keyword>
<keyword id="KW-0952">Extinct organism protein</keyword>
<keyword id="KW-0349">Heme</keyword>
<keyword id="KW-0408">Iron</keyword>
<keyword id="KW-0472">Membrane</keyword>
<keyword id="KW-0479">Metal-binding</keyword>
<keyword id="KW-0496">Mitochondrion</keyword>
<keyword id="KW-0999">Mitochondrion inner membrane</keyword>
<keyword id="KW-0679">Respiratory chain</keyword>
<keyword id="KW-0812">Transmembrane</keyword>
<keyword id="KW-1133">Transmembrane helix</keyword>
<keyword id="KW-0813">Transport</keyword>
<keyword id="KW-0830">Ubiquinone</keyword>